<evidence type="ECO:0000255" key="1">
    <source>
        <dbReference type="HAMAP-Rule" id="MF_00176"/>
    </source>
</evidence>
<evidence type="ECO:0000256" key="2">
    <source>
        <dbReference type="SAM" id="MobiDB-lite"/>
    </source>
</evidence>
<keyword id="KW-0030">Aminoacyl-tRNA synthetase</keyword>
<keyword id="KW-0067">ATP-binding</keyword>
<keyword id="KW-0963">Cytoplasm</keyword>
<keyword id="KW-0436">Ligase</keyword>
<keyword id="KW-0547">Nucleotide-binding</keyword>
<keyword id="KW-0648">Protein biosynthesis</keyword>
<proteinExistence type="inferred from homology"/>
<gene>
    <name evidence="1" type="primary">serS</name>
    <name type="ordered locus">FTN_0647</name>
</gene>
<accession>A0Q5M5</accession>
<sequence>MLDAKYIKDNLQQVAEKLATRGYQFDIAEFEAQEQKRRHLQERTQDLQSQRNTISKEIGQKKAKGEDTSDIFAKVNQINEELKIIEKELKDLQDTINQTLLSMPNLPADDVPVGKDENDNVEIRRWGTPREFHPEAPAKDHADIGEILKMIDFKAAAKVTGSRFMVLKNKIAKLHRALSQFMLDLHTEKHGYEELYVPYLVNNDSLYGTGQLPKFAADLFKLEGDFEYSLIPTAEVPITNLVRDEILDTETLPRYYTAHTPCFRSEAGSYGRDTKGMIRQHQFEKVELVHITAADKGEESLELLTSHAEKVLQKLNLPYRVMKLCTGDMSFSAKKTYDLEVWLPSQNTYREISSCSWCGDFQARRMKARHKNPSMKKPELVHTLNGSGLAVGRTLLAIIENYQQEDGSIMVPDALIKYMGGISVIK</sequence>
<protein>
    <recommendedName>
        <fullName evidence="1">Serine--tRNA ligase</fullName>
        <ecNumber evidence="1">6.1.1.11</ecNumber>
    </recommendedName>
    <alternativeName>
        <fullName evidence="1">Seryl-tRNA synthetase</fullName>
        <shortName evidence="1">SerRS</shortName>
    </alternativeName>
    <alternativeName>
        <fullName evidence="1">Seryl-tRNA(Ser/Sec) synthetase</fullName>
    </alternativeName>
</protein>
<feature type="chain" id="PRO_1000019684" description="Serine--tRNA ligase">
    <location>
        <begin position="1"/>
        <end position="426"/>
    </location>
</feature>
<feature type="region of interest" description="Disordered" evidence="2">
    <location>
        <begin position="36"/>
        <end position="66"/>
    </location>
</feature>
<feature type="compositionally biased region" description="Polar residues" evidence="2">
    <location>
        <begin position="46"/>
        <end position="55"/>
    </location>
</feature>
<feature type="binding site" evidence="1">
    <location>
        <begin position="233"/>
        <end position="235"/>
    </location>
    <ligand>
        <name>L-serine</name>
        <dbReference type="ChEBI" id="CHEBI:33384"/>
    </ligand>
</feature>
<feature type="binding site" evidence="1">
    <location>
        <begin position="264"/>
        <end position="266"/>
    </location>
    <ligand>
        <name>ATP</name>
        <dbReference type="ChEBI" id="CHEBI:30616"/>
    </ligand>
</feature>
<feature type="binding site" evidence="1">
    <location>
        <position position="287"/>
    </location>
    <ligand>
        <name>L-serine</name>
        <dbReference type="ChEBI" id="CHEBI:33384"/>
    </ligand>
</feature>
<feature type="binding site" evidence="1">
    <location>
        <begin position="351"/>
        <end position="354"/>
    </location>
    <ligand>
        <name>ATP</name>
        <dbReference type="ChEBI" id="CHEBI:30616"/>
    </ligand>
</feature>
<feature type="binding site" evidence="1">
    <location>
        <position position="387"/>
    </location>
    <ligand>
        <name>L-serine</name>
        <dbReference type="ChEBI" id="CHEBI:33384"/>
    </ligand>
</feature>
<dbReference type="EC" id="6.1.1.11" evidence="1"/>
<dbReference type="EMBL" id="CP000439">
    <property type="protein sequence ID" value="ABK89540.1"/>
    <property type="molecule type" value="Genomic_DNA"/>
</dbReference>
<dbReference type="RefSeq" id="WP_003038739.1">
    <property type="nucleotide sequence ID" value="NC_008601.1"/>
</dbReference>
<dbReference type="SMR" id="A0Q5M5"/>
<dbReference type="KEGG" id="ftn:FTN_0647"/>
<dbReference type="KEGG" id="ftx:AW25_1378"/>
<dbReference type="BioCyc" id="FTUL401614:G1G75-673-MONOMER"/>
<dbReference type="UniPathway" id="UPA00906">
    <property type="reaction ID" value="UER00895"/>
</dbReference>
<dbReference type="Proteomes" id="UP000000762">
    <property type="component" value="Chromosome"/>
</dbReference>
<dbReference type="GO" id="GO:0005737">
    <property type="term" value="C:cytoplasm"/>
    <property type="evidence" value="ECO:0007669"/>
    <property type="project" value="UniProtKB-SubCell"/>
</dbReference>
<dbReference type="GO" id="GO:0005524">
    <property type="term" value="F:ATP binding"/>
    <property type="evidence" value="ECO:0007669"/>
    <property type="project" value="UniProtKB-UniRule"/>
</dbReference>
<dbReference type="GO" id="GO:0004828">
    <property type="term" value="F:serine-tRNA ligase activity"/>
    <property type="evidence" value="ECO:0007669"/>
    <property type="project" value="UniProtKB-UniRule"/>
</dbReference>
<dbReference type="GO" id="GO:0016260">
    <property type="term" value="P:selenocysteine biosynthetic process"/>
    <property type="evidence" value="ECO:0007669"/>
    <property type="project" value="UniProtKB-UniRule"/>
</dbReference>
<dbReference type="GO" id="GO:0006434">
    <property type="term" value="P:seryl-tRNA aminoacylation"/>
    <property type="evidence" value="ECO:0007669"/>
    <property type="project" value="UniProtKB-UniRule"/>
</dbReference>
<dbReference type="CDD" id="cd00770">
    <property type="entry name" value="SerRS_core"/>
    <property type="match status" value="1"/>
</dbReference>
<dbReference type="Gene3D" id="3.30.930.10">
    <property type="entry name" value="Bira Bifunctional Protein, Domain 2"/>
    <property type="match status" value="1"/>
</dbReference>
<dbReference type="Gene3D" id="1.10.287.40">
    <property type="entry name" value="Serine-tRNA synthetase, tRNA binding domain"/>
    <property type="match status" value="1"/>
</dbReference>
<dbReference type="HAMAP" id="MF_00176">
    <property type="entry name" value="Ser_tRNA_synth_type1"/>
    <property type="match status" value="1"/>
</dbReference>
<dbReference type="InterPro" id="IPR002314">
    <property type="entry name" value="aa-tRNA-synt_IIb"/>
</dbReference>
<dbReference type="InterPro" id="IPR006195">
    <property type="entry name" value="aa-tRNA-synth_II"/>
</dbReference>
<dbReference type="InterPro" id="IPR045864">
    <property type="entry name" value="aa-tRNA-synth_II/BPL/LPL"/>
</dbReference>
<dbReference type="InterPro" id="IPR002317">
    <property type="entry name" value="Ser-tRNA-ligase_type_1"/>
</dbReference>
<dbReference type="InterPro" id="IPR015866">
    <property type="entry name" value="Ser-tRNA-synth_1_N"/>
</dbReference>
<dbReference type="InterPro" id="IPR042103">
    <property type="entry name" value="SerRS_1_N_sf"/>
</dbReference>
<dbReference type="InterPro" id="IPR033729">
    <property type="entry name" value="SerRS_core"/>
</dbReference>
<dbReference type="InterPro" id="IPR010978">
    <property type="entry name" value="tRNA-bd_arm"/>
</dbReference>
<dbReference type="NCBIfam" id="TIGR00414">
    <property type="entry name" value="serS"/>
    <property type="match status" value="1"/>
</dbReference>
<dbReference type="PANTHER" id="PTHR43697:SF1">
    <property type="entry name" value="SERINE--TRNA LIGASE"/>
    <property type="match status" value="1"/>
</dbReference>
<dbReference type="PANTHER" id="PTHR43697">
    <property type="entry name" value="SERYL-TRNA SYNTHETASE"/>
    <property type="match status" value="1"/>
</dbReference>
<dbReference type="Pfam" id="PF02403">
    <property type="entry name" value="Seryl_tRNA_N"/>
    <property type="match status" value="1"/>
</dbReference>
<dbReference type="Pfam" id="PF00587">
    <property type="entry name" value="tRNA-synt_2b"/>
    <property type="match status" value="1"/>
</dbReference>
<dbReference type="PIRSF" id="PIRSF001529">
    <property type="entry name" value="Ser-tRNA-synth_IIa"/>
    <property type="match status" value="1"/>
</dbReference>
<dbReference type="PRINTS" id="PR00981">
    <property type="entry name" value="TRNASYNTHSER"/>
</dbReference>
<dbReference type="SUPFAM" id="SSF55681">
    <property type="entry name" value="Class II aaRS and biotin synthetases"/>
    <property type="match status" value="1"/>
</dbReference>
<dbReference type="SUPFAM" id="SSF46589">
    <property type="entry name" value="tRNA-binding arm"/>
    <property type="match status" value="1"/>
</dbReference>
<dbReference type="PROSITE" id="PS50862">
    <property type="entry name" value="AA_TRNA_LIGASE_II"/>
    <property type="match status" value="1"/>
</dbReference>
<organism>
    <name type="scientific">Francisella tularensis subsp. novicida (strain U112)</name>
    <dbReference type="NCBI Taxonomy" id="401614"/>
    <lineage>
        <taxon>Bacteria</taxon>
        <taxon>Pseudomonadati</taxon>
        <taxon>Pseudomonadota</taxon>
        <taxon>Gammaproteobacteria</taxon>
        <taxon>Thiotrichales</taxon>
        <taxon>Francisellaceae</taxon>
        <taxon>Francisella</taxon>
    </lineage>
</organism>
<comment type="function">
    <text evidence="1">Catalyzes the attachment of serine to tRNA(Ser). Is also able to aminoacylate tRNA(Sec) with serine, to form the misacylated tRNA L-seryl-tRNA(Sec), which will be further converted into selenocysteinyl-tRNA(Sec).</text>
</comment>
<comment type="catalytic activity">
    <reaction evidence="1">
        <text>tRNA(Ser) + L-serine + ATP = L-seryl-tRNA(Ser) + AMP + diphosphate + H(+)</text>
        <dbReference type="Rhea" id="RHEA:12292"/>
        <dbReference type="Rhea" id="RHEA-COMP:9669"/>
        <dbReference type="Rhea" id="RHEA-COMP:9703"/>
        <dbReference type="ChEBI" id="CHEBI:15378"/>
        <dbReference type="ChEBI" id="CHEBI:30616"/>
        <dbReference type="ChEBI" id="CHEBI:33019"/>
        <dbReference type="ChEBI" id="CHEBI:33384"/>
        <dbReference type="ChEBI" id="CHEBI:78442"/>
        <dbReference type="ChEBI" id="CHEBI:78533"/>
        <dbReference type="ChEBI" id="CHEBI:456215"/>
        <dbReference type="EC" id="6.1.1.11"/>
    </reaction>
</comment>
<comment type="catalytic activity">
    <reaction evidence="1">
        <text>tRNA(Sec) + L-serine + ATP = L-seryl-tRNA(Sec) + AMP + diphosphate + H(+)</text>
        <dbReference type="Rhea" id="RHEA:42580"/>
        <dbReference type="Rhea" id="RHEA-COMP:9742"/>
        <dbReference type="Rhea" id="RHEA-COMP:10128"/>
        <dbReference type="ChEBI" id="CHEBI:15378"/>
        <dbReference type="ChEBI" id="CHEBI:30616"/>
        <dbReference type="ChEBI" id="CHEBI:33019"/>
        <dbReference type="ChEBI" id="CHEBI:33384"/>
        <dbReference type="ChEBI" id="CHEBI:78442"/>
        <dbReference type="ChEBI" id="CHEBI:78533"/>
        <dbReference type="ChEBI" id="CHEBI:456215"/>
        <dbReference type="EC" id="6.1.1.11"/>
    </reaction>
</comment>
<comment type="pathway">
    <text evidence="1">Aminoacyl-tRNA biosynthesis; selenocysteinyl-tRNA(Sec) biosynthesis; L-seryl-tRNA(Sec) from L-serine and tRNA(Sec): step 1/1.</text>
</comment>
<comment type="subunit">
    <text evidence="1">Homodimer. The tRNA molecule binds across the dimer.</text>
</comment>
<comment type="subcellular location">
    <subcellularLocation>
        <location evidence="1">Cytoplasm</location>
    </subcellularLocation>
</comment>
<comment type="domain">
    <text evidence="1">Consists of two distinct domains, a catalytic core and a N-terminal extension that is involved in tRNA binding.</text>
</comment>
<comment type="similarity">
    <text evidence="1">Belongs to the class-II aminoacyl-tRNA synthetase family. Type-1 seryl-tRNA synthetase subfamily.</text>
</comment>
<reference key="1">
    <citation type="journal article" date="2007" name="Genome Biol.">
        <title>Comparison of Francisella tularensis genomes reveals evolutionary events associated with the emergence of human pathogenic strains.</title>
        <authorList>
            <person name="Rohmer L."/>
            <person name="Fong C."/>
            <person name="Abmayr S."/>
            <person name="Wasnick M."/>
            <person name="Larson Freeman T.J."/>
            <person name="Radey M."/>
            <person name="Guina T."/>
            <person name="Svensson K."/>
            <person name="Hayden H.S."/>
            <person name="Jacobs M."/>
            <person name="Gallagher L.A."/>
            <person name="Manoil C."/>
            <person name="Ernst R.K."/>
            <person name="Drees B."/>
            <person name="Buckley D."/>
            <person name="Haugen E."/>
            <person name="Bovee D."/>
            <person name="Zhou Y."/>
            <person name="Chang J."/>
            <person name="Levy R."/>
            <person name="Lim R."/>
            <person name="Gillett W."/>
            <person name="Guenthener D."/>
            <person name="Kang A."/>
            <person name="Shaffer S.A."/>
            <person name="Taylor G."/>
            <person name="Chen J."/>
            <person name="Gallis B."/>
            <person name="D'Argenio D.A."/>
            <person name="Forsman M."/>
            <person name="Olson M.V."/>
            <person name="Goodlett D.R."/>
            <person name="Kaul R."/>
            <person name="Miller S.I."/>
            <person name="Brittnacher M.J."/>
        </authorList>
    </citation>
    <scope>NUCLEOTIDE SEQUENCE [LARGE SCALE GENOMIC DNA]</scope>
    <source>
        <strain>U112</strain>
    </source>
</reference>
<name>SYS_FRATN</name>